<name>GLGX_SALPK</name>
<evidence type="ECO:0000255" key="1">
    <source>
        <dbReference type="HAMAP-Rule" id="MF_01248"/>
    </source>
</evidence>
<evidence type="ECO:0000256" key="2">
    <source>
        <dbReference type="SAM" id="MobiDB-lite"/>
    </source>
</evidence>
<feature type="chain" id="PRO_1000139878" description="Glycogen debranching enzyme">
    <location>
        <begin position="1"/>
        <end position="658"/>
    </location>
</feature>
<feature type="region of interest" description="Disordered" evidence="2">
    <location>
        <begin position="459"/>
        <end position="484"/>
    </location>
</feature>
<feature type="active site" description="Nucleophile" evidence="1">
    <location>
        <position position="336"/>
    </location>
</feature>
<feature type="active site" description="Proton donor" evidence="1">
    <location>
        <position position="371"/>
    </location>
</feature>
<feature type="site" description="Transition state stabilizer" evidence="1">
    <location>
        <position position="443"/>
    </location>
</feature>
<proteinExistence type="inferred from homology"/>
<keyword id="KW-0119">Carbohydrate metabolism</keyword>
<keyword id="KW-0321">Glycogen metabolism</keyword>
<keyword id="KW-0326">Glycosidase</keyword>
<keyword id="KW-0378">Hydrolase</keyword>
<protein>
    <recommendedName>
        <fullName evidence="1">Glycogen debranching enzyme</fullName>
        <ecNumber evidence="1">3.2.1.196</ecNumber>
    </recommendedName>
    <alternativeName>
        <fullName evidence="1">Limit dextrin alpha-1,6-maltotetraose-hydrolase</fullName>
    </alternativeName>
</protein>
<sequence length="658" mass="73670">MTQLAIGEATPHGATYDGHGVNFTLFSAHAERVELCVFDSRGNERRYDLPGRRGDVWHGYLAGARPGLRYGYRVHGPWQPAQGHRFNPAKLLLDPYARRVEGELKDHPLLHGGHDEPDYRDNAAVAPKSVVISDHYDWEDDAAPRTPWGKTVIYEAHVKGLTYLHPELPQEIRGTYKALGHPVMVAYFKQLGITALELLPVAQFASEPRLQRMGLTNYWGYNPMAMFALHPAWASSPETALDEFRDAVKALHRAGIEVILDIVLNHSAELDLDGPTFSLRGIDNRSYYWIRDDGDYHNWTGCGNTLNLSHPDVVEYACECLRYWVETCHVDGFRFDLASVMGRTPTFRQDAPLFAAIKACPVLSTVKLIAEPWDIGEGGYQVGNFPPPFAEWNDHFRDAARRFWLPRNLTTGEFACRFAASSDVFKRNGRAPGASVNLLTAHDGFTLRDCVCFNQKHNEANGEENRDGTNSNYSDNHGKEGLGGPLDLMERRRDSIHALLATLLLSQGTPMLLAGDEHGHSQHGNNNAYCQDNALTWLDWQQANRGLTTFTAALIRLRQQIPALTGNSWWEEGDGNVRWLNKNAQPLSADEWQNGPKLMQILLSDRFLIAINATLEVTDIVLPEGEWRAVPPFAGEDNPVITAVWQGPAHGLCVFQRG</sequence>
<dbReference type="EC" id="3.2.1.196" evidence="1"/>
<dbReference type="EMBL" id="FM200053">
    <property type="protein sequence ID" value="CAR61418.1"/>
    <property type="molecule type" value="Genomic_DNA"/>
</dbReference>
<dbReference type="RefSeq" id="WP_000192488.1">
    <property type="nucleotide sequence ID" value="NC_011147.1"/>
</dbReference>
<dbReference type="SMR" id="B5BHI1"/>
<dbReference type="CAZy" id="CBM48">
    <property type="family name" value="Carbohydrate-Binding Module Family 48"/>
</dbReference>
<dbReference type="CAZy" id="GH13">
    <property type="family name" value="Glycoside Hydrolase Family 13"/>
</dbReference>
<dbReference type="KEGG" id="sek:SSPA3163"/>
<dbReference type="HOGENOM" id="CLU_011725_1_1_6"/>
<dbReference type="UniPathway" id="UPA00165"/>
<dbReference type="Proteomes" id="UP000001869">
    <property type="component" value="Chromosome"/>
</dbReference>
<dbReference type="GO" id="GO:0004133">
    <property type="term" value="F:glycogen debranching enzyme activity"/>
    <property type="evidence" value="ECO:0007669"/>
    <property type="project" value="UniProtKB-UniRule"/>
</dbReference>
<dbReference type="GO" id="GO:0004553">
    <property type="term" value="F:hydrolase activity, hydrolyzing O-glycosyl compounds"/>
    <property type="evidence" value="ECO:0007669"/>
    <property type="project" value="InterPro"/>
</dbReference>
<dbReference type="GO" id="GO:0005980">
    <property type="term" value="P:glycogen catabolic process"/>
    <property type="evidence" value="ECO:0007669"/>
    <property type="project" value="UniProtKB-UniRule"/>
</dbReference>
<dbReference type="CDD" id="cd11326">
    <property type="entry name" value="AmyAc_Glg_debranch"/>
    <property type="match status" value="1"/>
</dbReference>
<dbReference type="CDD" id="cd02856">
    <property type="entry name" value="E_set_GDE_Isoamylase_N"/>
    <property type="match status" value="1"/>
</dbReference>
<dbReference type="FunFam" id="2.60.40.10:FF:000468">
    <property type="entry name" value="Glycogen debranching enzyme"/>
    <property type="match status" value="1"/>
</dbReference>
<dbReference type="Gene3D" id="3.20.20.80">
    <property type="entry name" value="Glycosidases"/>
    <property type="match status" value="1"/>
</dbReference>
<dbReference type="Gene3D" id="2.60.40.1180">
    <property type="entry name" value="Golgi alpha-mannosidase II"/>
    <property type="match status" value="1"/>
</dbReference>
<dbReference type="Gene3D" id="2.60.40.10">
    <property type="entry name" value="Immunoglobulins"/>
    <property type="match status" value="1"/>
</dbReference>
<dbReference type="HAMAP" id="MF_01248">
    <property type="entry name" value="GlgX"/>
    <property type="match status" value="1"/>
</dbReference>
<dbReference type="InterPro" id="IPR040784">
    <property type="entry name" value="GlgX_C"/>
</dbReference>
<dbReference type="InterPro" id="IPR044505">
    <property type="entry name" value="GlgX_Isoamylase_N_E_set"/>
</dbReference>
<dbReference type="InterPro" id="IPR006047">
    <property type="entry name" value="Glyco_hydro_13_cat_dom"/>
</dbReference>
<dbReference type="InterPro" id="IPR004193">
    <property type="entry name" value="Glyco_hydro_13_N"/>
</dbReference>
<dbReference type="InterPro" id="IPR013780">
    <property type="entry name" value="Glyco_hydro_b"/>
</dbReference>
<dbReference type="InterPro" id="IPR022844">
    <property type="entry name" value="Glycogen_debranch_bac"/>
</dbReference>
<dbReference type="InterPro" id="IPR011837">
    <property type="entry name" value="Glycogen_debranch_GlgX"/>
</dbReference>
<dbReference type="InterPro" id="IPR017853">
    <property type="entry name" value="Glycoside_hydrolase_SF"/>
</dbReference>
<dbReference type="InterPro" id="IPR013783">
    <property type="entry name" value="Ig-like_fold"/>
</dbReference>
<dbReference type="InterPro" id="IPR014756">
    <property type="entry name" value="Ig_E-set"/>
</dbReference>
<dbReference type="NCBIfam" id="TIGR02100">
    <property type="entry name" value="glgX_debranch"/>
    <property type="match status" value="1"/>
</dbReference>
<dbReference type="NCBIfam" id="NF002983">
    <property type="entry name" value="PRK03705.1"/>
    <property type="match status" value="1"/>
</dbReference>
<dbReference type="PANTHER" id="PTHR43002">
    <property type="entry name" value="GLYCOGEN DEBRANCHING ENZYME"/>
    <property type="match status" value="1"/>
</dbReference>
<dbReference type="Pfam" id="PF00128">
    <property type="entry name" value="Alpha-amylase"/>
    <property type="match status" value="1"/>
</dbReference>
<dbReference type="Pfam" id="PF02922">
    <property type="entry name" value="CBM_48"/>
    <property type="match status" value="1"/>
</dbReference>
<dbReference type="Pfam" id="PF18390">
    <property type="entry name" value="GlgX_C"/>
    <property type="match status" value="1"/>
</dbReference>
<dbReference type="SMART" id="SM00642">
    <property type="entry name" value="Aamy"/>
    <property type="match status" value="1"/>
</dbReference>
<dbReference type="SUPFAM" id="SSF51445">
    <property type="entry name" value="(Trans)glycosidases"/>
    <property type="match status" value="1"/>
</dbReference>
<dbReference type="SUPFAM" id="SSF81296">
    <property type="entry name" value="E set domains"/>
    <property type="match status" value="1"/>
</dbReference>
<gene>
    <name evidence="1" type="primary">glgX</name>
    <name type="ordered locus">SSPA3163</name>
</gene>
<reference key="1">
    <citation type="journal article" date="2009" name="BMC Genomics">
        <title>Pseudogene accumulation in the evolutionary histories of Salmonella enterica serovars Paratyphi A and Typhi.</title>
        <authorList>
            <person name="Holt K.E."/>
            <person name="Thomson N.R."/>
            <person name="Wain J."/>
            <person name="Langridge G.C."/>
            <person name="Hasan R."/>
            <person name="Bhutta Z.A."/>
            <person name="Quail M.A."/>
            <person name="Norbertczak H."/>
            <person name="Walker D."/>
            <person name="Simmonds M."/>
            <person name="White B."/>
            <person name="Bason N."/>
            <person name="Mungall K."/>
            <person name="Dougan G."/>
            <person name="Parkhill J."/>
        </authorList>
    </citation>
    <scope>NUCLEOTIDE SEQUENCE [LARGE SCALE GENOMIC DNA]</scope>
    <source>
        <strain>AKU_12601</strain>
    </source>
</reference>
<organism>
    <name type="scientific">Salmonella paratyphi A (strain AKU_12601)</name>
    <dbReference type="NCBI Taxonomy" id="554290"/>
    <lineage>
        <taxon>Bacteria</taxon>
        <taxon>Pseudomonadati</taxon>
        <taxon>Pseudomonadota</taxon>
        <taxon>Gammaproteobacteria</taxon>
        <taxon>Enterobacterales</taxon>
        <taxon>Enterobacteriaceae</taxon>
        <taxon>Salmonella</taxon>
    </lineage>
</organism>
<accession>B5BHI1</accession>
<comment type="function">
    <text evidence="1">Removes maltotriose and maltotetraose chains that are attached by 1,6-alpha-linkage to the limit dextrin main chain, generating a debranched limit dextrin.</text>
</comment>
<comment type="catalytic activity">
    <reaction evidence="1">
        <text>Hydrolysis of (1-&gt;6)-alpha-D-glucosidic linkages to branches with degrees of polymerization of three or four glucose residues in limit dextrin.</text>
        <dbReference type="EC" id="3.2.1.196"/>
    </reaction>
</comment>
<comment type="pathway">
    <text evidence="1">Glycan degradation; glycogen degradation.</text>
</comment>
<comment type="similarity">
    <text evidence="1">Belongs to the glycosyl hydrolase 13 family.</text>
</comment>